<gene>
    <name evidence="1" type="primary">gpmA</name>
    <name type="ordered locus">Pnuc_1948</name>
</gene>
<protein>
    <recommendedName>
        <fullName evidence="1">2,3-bisphosphoglycerate-dependent phosphoglycerate mutase</fullName>
        <shortName evidence="1">BPG-dependent PGAM</shortName>
        <shortName evidence="1">PGAM</shortName>
        <shortName evidence="1">Phosphoglyceromutase</shortName>
        <shortName evidence="1">dPGM</shortName>
        <ecNumber evidence="1">5.4.2.11</ecNumber>
    </recommendedName>
</protein>
<proteinExistence type="inferred from homology"/>
<evidence type="ECO:0000255" key="1">
    <source>
        <dbReference type="HAMAP-Rule" id="MF_01039"/>
    </source>
</evidence>
<feature type="chain" id="PRO_1000084327" description="2,3-bisphosphoglycerate-dependent phosphoglycerate mutase">
    <location>
        <begin position="1"/>
        <end position="229"/>
    </location>
</feature>
<feature type="active site" description="Tele-phosphohistidine intermediate" evidence="1">
    <location>
        <position position="9"/>
    </location>
</feature>
<feature type="active site" description="Proton donor/acceptor" evidence="1">
    <location>
        <position position="87"/>
    </location>
</feature>
<feature type="binding site" evidence="1">
    <location>
        <begin position="8"/>
        <end position="15"/>
    </location>
    <ligand>
        <name>substrate</name>
    </ligand>
</feature>
<feature type="binding site" evidence="1">
    <location>
        <begin position="21"/>
        <end position="22"/>
    </location>
    <ligand>
        <name>substrate</name>
    </ligand>
</feature>
<feature type="binding site" evidence="1">
    <location>
        <position position="60"/>
    </location>
    <ligand>
        <name>substrate</name>
    </ligand>
</feature>
<feature type="binding site" evidence="1">
    <location>
        <begin position="87"/>
        <end position="90"/>
    </location>
    <ligand>
        <name>substrate</name>
    </ligand>
</feature>
<feature type="binding site" evidence="1">
    <location>
        <position position="98"/>
    </location>
    <ligand>
        <name>substrate</name>
    </ligand>
</feature>
<feature type="binding site" evidence="1">
    <location>
        <begin position="114"/>
        <end position="115"/>
    </location>
    <ligand>
        <name>substrate</name>
    </ligand>
</feature>
<feature type="binding site" evidence="1">
    <location>
        <begin position="183"/>
        <end position="184"/>
    </location>
    <ligand>
        <name>substrate</name>
    </ligand>
</feature>
<feature type="site" description="Transition state stabilizer" evidence="1">
    <location>
        <position position="182"/>
    </location>
</feature>
<organism>
    <name type="scientific">Polynucleobacter asymbioticus (strain DSM 18221 / CIP 109841 / QLW-P1DMWA-1)</name>
    <name type="common">Polynucleobacter necessarius subsp. asymbioticus</name>
    <dbReference type="NCBI Taxonomy" id="312153"/>
    <lineage>
        <taxon>Bacteria</taxon>
        <taxon>Pseudomonadati</taxon>
        <taxon>Pseudomonadota</taxon>
        <taxon>Betaproteobacteria</taxon>
        <taxon>Burkholderiales</taxon>
        <taxon>Burkholderiaceae</taxon>
        <taxon>Polynucleobacter</taxon>
    </lineage>
</organism>
<dbReference type="EC" id="5.4.2.11" evidence="1"/>
<dbReference type="EMBL" id="CP000655">
    <property type="protein sequence ID" value="ABP35160.1"/>
    <property type="molecule type" value="Genomic_DNA"/>
</dbReference>
<dbReference type="RefSeq" id="WP_011903783.1">
    <property type="nucleotide sequence ID" value="NC_009379.1"/>
</dbReference>
<dbReference type="SMR" id="A4T096"/>
<dbReference type="GeneID" id="31482339"/>
<dbReference type="KEGG" id="pnu:Pnuc_1948"/>
<dbReference type="eggNOG" id="COG0588">
    <property type="taxonomic scope" value="Bacteria"/>
</dbReference>
<dbReference type="HOGENOM" id="CLU_033323_1_1_4"/>
<dbReference type="UniPathway" id="UPA00109">
    <property type="reaction ID" value="UER00186"/>
</dbReference>
<dbReference type="Proteomes" id="UP000000231">
    <property type="component" value="Chromosome"/>
</dbReference>
<dbReference type="GO" id="GO:0004619">
    <property type="term" value="F:phosphoglycerate mutase activity"/>
    <property type="evidence" value="ECO:0007669"/>
    <property type="project" value="UniProtKB-EC"/>
</dbReference>
<dbReference type="GO" id="GO:0006094">
    <property type="term" value="P:gluconeogenesis"/>
    <property type="evidence" value="ECO:0007669"/>
    <property type="project" value="UniProtKB-UniRule"/>
</dbReference>
<dbReference type="GO" id="GO:0006096">
    <property type="term" value="P:glycolytic process"/>
    <property type="evidence" value="ECO:0007669"/>
    <property type="project" value="UniProtKB-UniRule"/>
</dbReference>
<dbReference type="CDD" id="cd07067">
    <property type="entry name" value="HP_PGM_like"/>
    <property type="match status" value="1"/>
</dbReference>
<dbReference type="FunFam" id="3.40.50.1240:FF:000003">
    <property type="entry name" value="2,3-bisphosphoglycerate-dependent phosphoglycerate mutase"/>
    <property type="match status" value="1"/>
</dbReference>
<dbReference type="Gene3D" id="3.40.50.1240">
    <property type="entry name" value="Phosphoglycerate mutase-like"/>
    <property type="match status" value="1"/>
</dbReference>
<dbReference type="HAMAP" id="MF_01039">
    <property type="entry name" value="PGAM_GpmA"/>
    <property type="match status" value="1"/>
</dbReference>
<dbReference type="InterPro" id="IPR013078">
    <property type="entry name" value="His_Pase_superF_clade-1"/>
</dbReference>
<dbReference type="InterPro" id="IPR029033">
    <property type="entry name" value="His_PPase_superfam"/>
</dbReference>
<dbReference type="InterPro" id="IPR001345">
    <property type="entry name" value="PG/BPGM_mutase_AS"/>
</dbReference>
<dbReference type="InterPro" id="IPR005952">
    <property type="entry name" value="Phosphogly_mut1"/>
</dbReference>
<dbReference type="NCBIfam" id="TIGR01258">
    <property type="entry name" value="pgm_1"/>
    <property type="match status" value="1"/>
</dbReference>
<dbReference type="NCBIfam" id="NF010713">
    <property type="entry name" value="PRK14115.1"/>
    <property type="match status" value="1"/>
</dbReference>
<dbReference type="PANTHER" id="PTHR11931">
    <property type="entry name" value="PHOSPHOGLYCERATE MUTASE"/>
    <property type="match status" value="1"/>
</dbReference>
<dbReference type="Pfam" id="PF00300">
    <property type="entry name" value="His_Phos_1"/>
    <property type="match status" value="2"/>
</dbReference>
<dbReference type="PIRSF" id="PIRSF000709">
    <property type="entry name" value="6PFK_2-Ptase"/>
    <property type="match status" value="1"/>
</dbReference>
<dbReference type="SMART" id="SM00855">
    <property type="entry name" value="PGAM"/>
    <property type="match status" value="1"/>
</dbReference>
<dbReference type="SUPFAM" id="SSF53254">
    <property type="entry name" value="Phosphoglycerate mutase-like"/>
    <property type="match status" value="1"/>
</dbReference>
<dbReference type="PROSITE" id="PS00175">
    <property type="entry name" value="PG_MUTASE"/>
    <property type="match status" value="1"/>
</dbReference>
<keyword id="KW-0312">Gluconeogenesis</keyword>
<keyword id="KW-0324">Glycolysis</keyword>
<keyword id="KW-0413">Isomerase</keyword>
<keyword id="KW-1185">Reference proteome</keyword>
<sequence length="229" mass="26322">MKQLVLIRHGESAWNLENRFTGWADVDLTPKGAEQALAAGEHLRKAGYEFDVAYTSVLRRAIRTLWHVQDAMDLMWLPVVHSWRLNERHYGALTGLNKAETAAQYGDEQVHIWRRSYDIRPPLLEADDERNPKNDSRYAKLNESDIPLGECLKDNVERVLPLWNESIAPALKANKRVLLVAHGNSIRSLIKYLDQMSDEAIMEVNVPNGIPLVYELDDNLKPIQHFYLD</sequence>
<name>GPMA_POLAQ</name>
<accession>A4T096</accession>
<reference key="1">
    <citation type="journal article" date="2012" name="Stand. Genomic Sci.">
        <title>Complete genome sequence of Polynucleobacter necessarius subsp. asymbioticus type strain (QLW-P1DMWA-1(T)).</title>
        <authorList>
            <person name="Meincke L."/>
            <person name="Copeland A."/>
            <person name="Lapidus A."/>
            <person name="Lucas S."/>
            <person name="Berry K.W."/>
            <person name="Del Rio T.G."/>
            <person name="Hammon N."/>
            <person name="Dalin E."/>
            <person name="Tice H."/>
            <person name="Pitluck S."/>
            <person name="Richardson P."/>
            <person name="Bruce D."/>
            <person name="Goodwin L."/>
            <person name="Han C."/>
            <person name="Tapia R."/>
            <person name="Detter J.C."/>
            <person name="Schmutz J."/>
            <person name="Brettin T."/>
            <person name="Larimer F."/>
            <person name="Land M."/>
            <person name="Hauser L."/>
            <person name="Kyrpides N.C."/>
            <person name="Ivanova N."/>
            <person name="Goker M."/>
            <person name="Woyke T."/>
            <person name="Wu Q.L."/>
            <person name="Pockl M."/>
            <person name="Hahn M.W."/>
            <person name="Klenk H.P."/>
        </authorList>
    </citation>
    <scope>NUCLEOTIDE SEQUENCE [LARGE SCALE GENOMIC DNA]</scope>
    <source>
        <strain>DSM 18221 / CIP 109841 / QLW-P1DMWA-1</strain>
    </source>
</reference>
<comment type="function">
    <text evidence="1">Catalyzes the interconversion of 2-phosphoglycerate and 3-phosphoglycerate.</text>
</comment>
<comment type="catalytic activity">
    <reaction evidence="1">
        <text>(2R)-2-phosphoglycerate = (2R)-3-phosphoglycerate</text>
        <dbReference type="Rhea" id="RHEA:15901"/>
        <dbReference type="ChEBI" id="CHEBI:58272"/>
        <dbReference type="ChEBI" id="CHEBI:58289"/>
        <dbReference type="EC" id="5.4.2.11"/>
    </reaction>
</comment>
<comment type="pathway">
    <text evidence="1">Carbohydrate degradation; glycolysis; pyruvate from D-glyceraldehyde 3-phosphate: step 3/5.</text>
</comment>
<comment type="subunit">
    <text evidence="1">Homodimer.</text>
</comment>
<comment type="similarity">
    <text evidence="1">Belongs to the phosphoglycerate mutase family. BPG-dependent PGAM subfamily.</text>
</comment>